<reference key="1">
    <citation type="journal article" date="2006" name="Genome Res.">
        <title>Skewed genomic variability in strains of the toxigenic bacterial pathogen, Clostridium perfringens.</title>
        <authorList>
            <person name="Myers G.S.A."/>
            <person name="Rasko D.A."/>
            <person name="Cheung J.K."/>
            <person name="Ravel J."/>
            <person name="Seshadri R."/>
            <person name="DeBoy R.T."/>
            <person name="Ren Q."/>
            <person name="Varga J."/>
            <person name="Awad M.M."/>
            <person name="Brinkac L.M."/>
            <person name="Daugherty S.C."/>
            <person name="Haft D.H."/>
            <person name="Dodson R.J."/>
            <person name="Madupu R."/>
            <person name="Nelson W.C."/>
            <person name="Rosovitz M.J."/>
            <person name="Sullivan S.A."/>
            <person name="Khouri H."/>
            <person name="Dimitrov G.I."/>
            <person name="Watkins K.L."/>
            <person name="Mulligan S."/>
            <person name="Benton J."/>
            <person name="Radune D."/>
            <person name="Fisher D.J."/>
            <person name="Atkins H.S."/>
            <person name="Hiscox T."/>
            <person name="Jost B.H."/>
            <person name="Billington S.J."/>
            <person name="Songer J.G."/>
            <person name="McClane B.A."/>
            <person name="Titball R.W."/>
            <person name="Rood J.I."/>
            <person name="Melville S.B."/>
            <person name="Paulsen I.T."/>
        </authorList>
    </citation>
    <scope>NUCLEOTIDE SEQUENCE [LARGE SCALE GENOMIC DNA]</scope>
    <source>
        <strain>ATCC 13124 / DSM 756 / JCM 1290 / NCIMB 6125 / NCTC 8237 / S 107 / Type A</strain>
    </source>
</reference>
<evidence type="ECO:0000255" key="1">
    <source>
        <dbReference type="HAMAP-Rule" id="MF_00500"/>
    </source>
</evidence>
<evidence type="ECO:0000305" key="2"/>
<accession>Q0TNR8</accession>
<gene>
    <name evidence="1" type="primary">rpsT</name>
    <name type="ordered locus">CPF_2299</name>
</gene>
<dbReference type="EMBL" id="CP000246">
    <property type="protein sequence ID" value="ABG82574.1"/>
    <property type="molecule type" value="Genomic_DNA"/>
</dbReference>
<dbReference type="RefSeq" id="WP_003451389.1">
    <property type="nucleotide sequence ID" value="NC_008261.1"/>
</dbReference>
<dbReference type="SMR" id="Q0TNR8"/>
<dbReference type="STRING" id="195103.CPF_2299"/>
<dbReference type="PaxDb" id="195103-CPF_2299"/>
<dbReference type="GeneID" id="93001420"/>
<dbReference type="KEGG" id="cpf:CPF_2299"/>
<dbReference type="eggNOG" id="COG0268">
    <property type="taxonomic scope" value="Bacteria"/>
</dbReference>
<dbReference type="HOGENOM" id="CLU_160655_1_0_9"/>
<dbReference type="Proteomes" id="UP000001823">
    <property type="component" value="Chromosome"/>
</dbReference>
<dbReference type="GO" id="GO:0005829">
    <property type="term" value="C:cytosol"/>
    <property type="evidence" value="ECO:0007669"/>
    <property type="project" value="TreeGrafter"/>
</dbReference>
<dbReference type="GO" id="GO:0015935">
    <property type="term" value="C:small ribosomal subunit"/>
    <property type="evidence" value="ECO:0007669"/>
    <property type="project" value="TreeGrafter"/>
</dbReference>
<dbReference type="GO" id="GO:0070181">
    <property type="term" value="F:small ribosomal subunit rRNA binding"/>
    <property type="evidence" value="ECO:0007669"/>
    <property type="project" value="TreeGrafter"/>
</dbReference>
<dbReference type="GO" id="GO:0003735">
    <property type="term" value="F:structural constituent of ribosome"/>
    <property type="evidence" value="ECO:0007669"/>
    <property type="project" value="InterPro"/>
</dbReference>
<dbReference type="GO" id="GO:0006412">
    <property type="term" value="P:translation"/>
    <property type="evidence" value="ECO:0007669"/>
    <property type="project" value="UniProtKB-UniRule"/>
</dbReference>
<dbReference type="FunFam" id="1.20.58.110:FF:000001">
    <property type="entry name" value="30S ribosomal protein S20"/>
    <property type="match status" value="1"/>
</dbReference>
<dbReference type="Gene3D" id="1.20.58.110">
    <property type="entry name" value="Ribosomal protein S20"/>
    <property type="match status" value="1"/>
</dbReference>
<dbReference type="HAMAP" id="MF_00500">
    <property type="entry name" value="Ribosomal_bS20"/>
    <property type="match status" value="1"/>
</dbReference>
<dbReference type="InterPro" id="IPR002583">
    <property type="entry name" value="Ribosomal_bS20"/>
</dbReference>
<dbReference type="InterPro" id="IPR036510">
    <property type="entry name" value="Ribosomal_bS20_sf"/>
</dbReference>
<dbReference type="NCBIfam" id="TIGR00029">
    <property type="entry name" value="S20"/>
    <property type="match status" value="1"/>
</dbReference>
<dbReference type="PANTHER" id="PTHR33398">
    <property type="entry name" value="30S RIBOSOMAL PROTEIN S20"/>
    <property type="match status" value="1"/>
</dbReference>
<dbReference type="PANTHER" id="PTHR33398:SF1">
    <property type="entry name" value="SMALL RIBOSOMAL SUBUNIT PROTEIN BS20C"/>
    <property type="match status" value="1"/>
</dbReference>
<dbReference type="Pfam" id="PF01649">
    <property type="entry name" value="Ribosomal_S20p"/>
    <property type="match status" value="1"/>
</dbReference>
<dbReference type="SUPFAM" id="SSF46992">
    <property type="entry name" value="Ribosomal protein S20"/>
    <property type="match status" value="1"/>
</dbReference>
<feature type="chain" id="PRO_0000260112" description="Small ribosomal subunit protein bS20">
    <location>
        <begin position="1"/>
        <end position="87"/>
    </location>
</feature>
<keyword id="KW-0687">Ribonucleoprotein</keyword>
<keyword id="KW-0689">Ribosomal protein</keyword>
<keyword id="KW-0694">RNA-binding</keyword>
<keyword id="KW-0699">rRNA-binding</keyword>
<organism>
    <name type="scientific">Clostridium perfringens (strain ATCC 13124 / DSM 756 / JCM 1290 / NCIMB 6125 / NCTC 8237 / Type A)</name>
    <dbReference type="NCBI Taxonomy" id="195103"/>
    <lineage>
        <taxon>Bacteria</taxon>
        <taxon>Bacillati</taxon>
        <taxon>Bacillota</taxon>
        <taxon>Clostridia</taxon>
        <taxon>Eubacteriales</taxon>
        <taxon>Clostridiaceae</taxon>
        <taxon>Clostridium</taxon>
    </lineage>
</organism>
<proteinExistence type="inferred from homology"/>
<sequence>MANIKSAKKRIKVTEKKTLRNKMIKSALKTAIKKFEVAVEANNKAEAATLYVEAARALDMSASKGVVHKNMAARKKSRLAAKLNAMA</sequence>
<protein>
    <recommendedName>
        <fullName evidence="1">Small ribosomal subunit protein bS20</fullName>
    </recommendedName>
    <alternativeName>
        <fullName evidence="2">30S ribosomal protein S20</fullName>
    </alternativeName>
</protein>
<comment type="function">
    <text evidence="1">Binds directly to 16S ribosomal RNA.</text>
</comment>
<comment type="similarity">
    <text evidence="1">Belongs to the bacterial ribosomal protein bS20 family.</text>
</comment>
<name>RS20_CLOP1</name>